<feature type="chain" id="PRO_0000179995" description="GTPase Era">
    <location>
        <begin position="1"/>
        <end position="301"/>
    </location>
</feature>
<feature type="domain" description="Era-type G" evidence="3">
    <location>
        <begin position="2"/>
        <end position="175"/>
    </location>
</feature>
<feature type="domain" description="KH type-2">
    <location>
        <begin position="206"/>
        <end position="285"/>
    </location>
</feature>
<feature type="region of interest" description="G1" evidence="3">
    <location>
        <begin position="10"/>
        <end position="17"/>
    </location>
</feature>
<feature type="region of interest" description="G2" evidence="3">
    <location>
        <begin position="36"/>
        <end position="40"/>
    </location>
</feature>
<feature type="region of interest" description="G3" evidence="3">
    <location>
        <begin position="58"/>
        <end position="61"/>
    </location>
</feature>
<feature type="region of interest" description="G4" evidence="3">
    <location>
        <begin position="123"/>
        <end position="126"/>
    </location>
</feature>
<feature type="region of interest" description="G5" evidence="3">
    <location>
        <begin position="154"/>
        <end position="156"/>
    </location>
</feature>
<feature type="binding site" evidence="2">
    <location>
        <begin position="10"/>
        <end position="17"/>
    </location>
    <ligand>
        <name>GTP</name>
        <dbReference type="ChEBI" id="CHEBI:37565"/>
    </ligand>
</feature>
<feature type="binding site" evidence="2">
    <location>
        <begin position="58"/>
        <end position="62"/>
    </location>
    <ligand>
        <name>GTP</name>
        <dbReference type="ChEBI" id="CHEBI:37565"/>
    </ligand>
</feature>
<feature type="binding site" evidence="2">
    <location>
        <begin position="123"/>
        <end position="126"/>
    </location>
    <ligand>
        <name>GTP</name>
        <dbReference type="ChEBI" id="CHEBI:37565"/>
    </ligand>
</feature>
<feature type="strand" evidence="5">
    <location>
        <begin position="2"/>
        <end position="9"/>
    </location>
</feature>
<feature type="helix" evidence="5">
    <location>
        <begin position="16"/>
        <end position="24"/>
    </location>
</feature>
<feature type="strand" evidence="5">
    <location>
        <begin position="33"/>
        <end position="35"/>
    </location>
</feature>
<feature type="strand" evidence="5">
    <location>
        <begin position="42"/>
        <end position="48"/>
    </location>
</feature>
<feature type="turn" evidence="5">
    <location>
        <begin position="49"/>
        <end position="51"/>
    </location>
</feature>
<feature type="strand" evidence="5">
    <location>
        <begin position="52"/>
        <end position="58"/>
    </location>
</feature>
<feature type="helix" evidence="5">
    <location>
        <begin position="70"/>
        <end position="85"/>
    </location>
</feature>
<feature type="strand" evidence="5">
    <location>
        <begin position="87"/>
        <end position="94"/>
    </location>
</feature>
<feature type="turn" evidence="5">
    <location>
        <begin position="95"/>
        <end position="97"/>
    </location>
</feature>
<feature type="helix" evidence="5">
    <location>
        <begin position="101"/>
        <end position="110"/>
    </location>
</feature>
<feature type="helix" evidence="5">
    <location>
        <begin position="112"/>
        <end position="114"/>
    </location>
</feature>
<feature type="strand" evidence="5">
    <location>
        <begin position="118"/>
        <end position="123"/>
    </location>
</feature>
<feature type="helix" evidence="5">
    <location>
        <begin position="125"/>
        <end position="127"/>
    </location>
</feature>
<feature type="strand" evidence="5">
    <location>
        <begin position="128"/>
        <end position="130"/>
    </location>
</feature>
<feature type="helix" evidence="5">
    <location>
        <begin position="131"/>
        <end position="134"/>
    </location>
</feature>
<feature type="helix" evidence="5">
    <location>
        <begin position="135"/>
        <end position="144"/>
    </location>
</feature>
<feature type="strand" evidence="5">
    <location>
        <begin position="151"/>
        <end position="153"/>
    </location>
</feature>
<feature type="turn" evidence="5">
    <location>
        <begin position="156"/>
        <end position="159"/>
    </location>
</feature>
<feature type="helix" evidence="5">
    <location>
        <begin position="162"/>
        <end position="172"/>
    </location>
</feature>
<feature type="helix" evidence="5">
    <location>
        <begin position="190"/>
        <end position="204"/>
    </location>
</feature>
<feature type="helix" evidence="5">
    <location>
        <begin position="210"/>
        <end position="213"/>
    </location>
</feature>
<feature type="strand" evidence="5">
    <location>
        <begin position="215"/>
        <end position="223"/>
    </location>
</feature>
<feature type="strand" evidence="5">
    <location>
        <begin position="230"/>
        <end position="241"/>
    </location>
</feature>
<feature type="helix" evidence="5">
    <location>
        <begin position="242"/>
        <end position="244"/>
    </location>
</feature>
<feature type="helix" evidence="5">
    <location>
        <begin position="245"/>
        <end position="249"/>
    </location>
</feature>
<feature type="helix" evidence="5">
    <location>
        <begin position="251"/>
        <end position="253"/>
    </location>
</feature>
<feature type="helix" evidence="5">
    <location>
        <begin position="254"/>
        <end position="271"/>
    </location>
</feature>
<feature type="strand" evidence="5">
    <location>
        <begin position="275"/>
        <end position="283"/>
    </location>
</feature>
<feature type="helix" evidence="5">
    <location>
        <begin position="287"/>
        <end position="289"/>
    </location>
</feature>
<feature type="helix" evidence="5">
    <location>
        <begin position="291"/>
        <end position="296"/>
    </location>
</feature>
<evidence type="ECO:0000250" key="1"/>
<evidence type="ECO:0000255" key="2"/>
<evidence type="ECO:0000255" key="3">
    <source>
        <dbReference type="PROSITE-ProRule" id="PRU01050"/>
    </source>
</evidence>
<evidence type="ECO:0000305" key="4"/>
<evidence type="ECO:0007829" key="5">
    <source>
        <dbReference type="PDB" id="3IEV"/>
    </source>
</evidence>
<keyword id="KW-0002">3D-structure</keyword>
<keyword id="KW-0997">Cell inner membrane</keyword>
<keyword id="KW-1003">Cell membrane</keyword>
<keyword id="KW-0963">Cytoplasm</keyword>
<keyword id="KW-0342">GTP-binding</keyword>
<keyword id="KW-0472">Membrane</keyword>
<keyword id="KW-0547">Nucleotide-binding</keyword>
<keyword id="KW-1185">Reference proteome</keyword>
<keyword id="KW-0690">Ribosome biogenesis</keyword>
<keyword id="KW-0694">RNA-binding</keyword>
<keyword id="KW-0699">rRNA-binding</keyword>
<protein>
    <recommendedName>
        <fullName>GTPase Era</fullName>
    </recommendedName>
</protein>
<organism>
    <name type="scientific">Aquifex aeolicus (strain VF5)</name>
    <dbReference type="NCBI Taxonomy" id="224324"/>
    <lineage>
        <taxon>Bacteria</taxon>
        <taxon>Pseudomonadati</taxon>
        <taxon>Aquificota</taxon>
        <taxon>Aquificia</taxon>
        <taxon>Aquificales</taxon>
        <taxon>Aquificaceae</taxon>
        <taxon>Aquifex</taxon>
    </lineage>
</organism>
<proteinExistence type="evidence at protein level"/>
<sequence>MKVGYVAIVGKPNVGKSTLLNNLLGTKVSIISPKAGTTRMRVLGVKNIPNEAQIIFLDTPGIYEPKKSDVLGHSMVEIAKQSLEEADVILFMIDATEGWRPRDEEIYQNFIKPLNKPVIVVINKIDKIGPAKNVLPLIDEIHKKHPELTEIVPISALKGANLDELVKTILKYLPEGEPLFPEDMITDLPLRLLAAEIVREKAMMLTREEVPTSIAVKINEIKPGDANPNMLVIKGEIIVDRENLKPIIIGKKGQRLKEIGKRARQELELILGRPVYLELWVKVVPDWRRRPEYVRLFGYAL</sequence>
<dbReference type="EMBL" id="AE000657">
    <property type="protein sequence ID" value="AAC07768.1"/>
    <property type="molecule type" value="Genomic_DNA"/>
</dbReference>
<dbReference type="PIR" id="D70471">
    <property type="entry name" value="D70471"/>
</dbReference>
<dbReference type="RefSeq" id="NP_214369.1">
    <property type="nucleotide sequence ID" value="NC_000918.1"/>
</dbReference>
<dbReference type="RefSeq" id="WP_010881305.1">
    <property type="nucleotide sequence ID" value="NC_000918.1"/>
</dbReference>
<dbReference type="PDB" id="3IEV">
    <property type="method" value="X-ray"/>
    <property type="resolution" value="1.90 A"/>
    <property type="chains" value="A=1-301"/>
</dbReference>
<dbReference type="PDB" id="3R9W">
    <property type="method" value="X-ray"/>
    <property type="resolution" value="2.05 A"/>
    <property type="chains" value="A=1-301"/>
</dbReference>
<dbReference type="PDB" id="3R9X">
    <property type="method" value="X-ray"/>
    <property type="resolution" value="2.80 A"/>
    <property type="chains" value="A=1-301"/>
</dbReference>
<dbReference type="PDB" id="7C1O">
    <property type="method" value="X-ray"/>
    <property type="resolution" value="2.18 A"/>
    <property type="chains" value="A=1-301"/>
</dbReference>
<dbReference type="PDBsum" id="3IEV"/>
<dbReference type="PDBsum" id="3R9W"/>
<dbReference type="PDBsum" id="3R9X"/>
<dbReference type="PDBsum" id="7C1O"/>
<dbReference type="SMR" id="O67800"/>
<dbReference type="FunCoup" id="O67800">
    <property type="interactions" value="425"/>
</dbReference>
<dbReference type="STRING" id="224324.aq_1994"/>
<dbReference type="EnsemblBacteria" id="AAC07768">
    <property type="protein sequence ID" value="AAC07768"/>
    <property type="gene ID" value="aq_1994"/>
</dbReference>
<dbReference type="KEGG" id="aae:aq_1994"/>
<dbReference type="PATRIC" id="fig|224324.8.peg.1542"/>
<dbReference type="eggNOG" id="COG1159">
    <property type="taxonomic scope" value="Bacteria"/>
</dbReference>
<dbReference type="HOGENOM" id="CLU_038009_1_0_0"/>
<dbReference type="InParanoid" id="O67800"/>
<dbReference type="OrthoDB" id="9805918at2"/>
<dbReference type="EvolutionaryTrace" id="O67800"/>
<dbReference type="Proteomes" id="UP000000798">
    <property type="component" value="Chromosome"/>
</dbReference>
<dbReference type="GO" id="GO:0005829">
    <property type="term" value="C:cytosol"/>
    <property type="evidence" value="ECO:0000318"/>
    <property type="project" value="GO_Central"/>
</dbReference>
<dbReference type="GO" id="GO:0005886">
    <property type="term" value="C:plasma membrane"/>
    <property type="evidence" value="ECO:0007669"/>
    <property type="project" value="UniProtKB-SubCell"/>
</dbReference>
<dbReference type="GO" id="GO:0005525">
    <property type="term" value="F:GTP binding"/>
    <property type="evidence" value="ECO:0007669"/>
    <property type="project" value="UniProtKB-UniRule"/>
</dbReference>
<dbReference type="GO" id="GO:0003924">
    <property type="term" value="F:GTPase activity"/>
    <property type="evidence" value="ECO:0007669"/>
    <property type="project" value="UniProtKB-UniRule"/>
</dbReference>
<dbReference type="GO" id="GO:0043024">
    <property type="term" value="F:ribosomal small subunit binding"/>
    <property type="evidence" value="ECO:0000318"/>
    <property type="project" value="GO_Central"/>
</dbReference>
<dbReference type="GO" id="GO:0019843">
    <property type="term" value="F:rRNA binding"/>
    <property type="evidence" value="ECO:0000318"/>
    <property type="project" value="GO_Central"/>
</dbReference>
<dbReference type="GO" id="GO:0070181">
    <property type="term" value="F:small ribosomal subunit rRNA binding"/>
    <property type="evidence" value="ECO:0007669"/>
    <property type="project" value="UniProtKB-UniRule"/>
</dbReference>
<dbReference type="GO" id="GO:0000028">
    <property type="term" value="P:ribosomal small subunit assembly"/>
    <property type="evidence" value="ECO:0000318"/>
    <property type="project" value="GO_Central"/>
</dbReference>
<dbReference type="CDD" id="cd04163">
    <property type="entry name" value="Era"/>
    <property type="match status" value="1"/>
</dbReference>
<dbReference type="CDD" id="cd22534">
    <property type="entry name" value="KH-II_Era"/>
    <property type="match status" value="1"/>
</dbReference>
<dbReference type="Gene3D" id="3.30.300.20">
    <property type="match status" value="1"/>
</dbReference>
<dbReference type="Gene3D" id="3.40.50.300">
    <property type="entry name" value="P-loop containing nucleotide triphosphate hydrolases"/>
    <property type="match status" value="1"/>
</dbReference>
<dbReference type="HAMAP" id="MF_00367">
    <property type="entry name" value="GTPase_Era"/>
    <property type="match status" value="1"/>
</dbReference>
<dbReference type="InterPro" id="IPR030388">
    <property type="entry name" value="G_ERA_dom"/>
</dbReference>
<dbReference type="InterPro" id="IPR006073">
    <property type="entry name" value="GTP-bd"/>
</dbReference>
<dbReference type="InterPro" id="IPR005662">
    <property type="entry name" value="GTPase_Era-like"/>
</dbReference>
<dbReference type="InterPro" id="IPR015946">
    <property type="entry name" value="KH_dom-like_a/b"/>
</dbReference>
<dbReference type="InterPro" id="IPR004044">
    <property type="entry name" value="KH_dom_type_2"/>
</dbReference>
<dbReference type="InterPro" id="IPR009019">
    <property type="entry name" value="KH_sf_prok-type"/>
</dbReference>
<dbReference type="InterPro" id="IPR027417">
    <property type="entry name" value="P-loop_NTPase"/>
</dbReference>
<dbReference type="InterPro" id="IPR005225">
    <property type="entry name" value="Small_GTP-bd"/>
</dbReference>
<dbReference type="NCBIfam" id="TIGR00436">
    <property type="entry name" value="era"/>
    <property type="match status" value="1"/>
</dbReference>
<dbReference type="NCBIfam" id="NF000908">
    <property type="entry name" value="PRK00089.1"/>
    <property type="match status" value="1"/>
</dbReference>
<dbReference type="NCBIfam" id="TIGR00231">
    <property type="entry name" value="small_GTP"/>
    <property type="match status" value="1"/>
</dbReference>
<dbReference type="PANTHER" id="PTHR42698">
    <property type="entry name" value="GTPASE ERA"/>
    <property type="match status" value="1"/>
</dbReference>
<dbReference type="PANTHER" id="PTHR42698:SF1">
    <property type="entry name" value="GTPASE ERA, MITOCHONDRIAL"/>
    <property type="match status" value="1"/>
</dbReference>
<dbReference type="Pfam" id="PF07650">
    <property type="entry name" value="KH_2"/>
    <property type="match status" value="1"/>
</dbReference>
<dbReference type="Pfam" id="PF01926">
    <property type="entry name" value="MMR_HSR1"/>
    <property type="match status" value="1"/>
</dbReference>
<dbReference type="PRINTS" id="PR00326">
    <property type="entry name" value="GTP1OBG"/>
</dbReference>
<dbReference type="SUPFAM" id="SSF52540">
    <property type="entry name" value="P-loop containing nucleoside triphosphate hydrolases"/>
    <property type="match status" value="1"/>
</dbReference>
<dbReference type="SUPFAM" id="SSF54814">
    <property type="entry name" value="Prokaryotic type KH domain (KH-domain type II)"/>
    <property type="match status" value="1"/>
</dbReference>
<dbReference type="PROSITE" id="PS51713">
    <property type="entry name" value="G_ERA"/>
    <property type="match status" value="1"/>
</dbReference>
<dbReference type="PROSITE" id="PS50823">
    <property type="entry name" value="KH_TYPE_2"/>
    <property type="match status" value="1"/>
</dbReference>
<reference key="1">
    <citation type="journal article" date="1998" name="Nature">
        <title>The complete genome of the hyperthermophilic bacterium Aquifex aeolicus.</title>
        <authorList>
            <person name="Deckert G."/>
            <person name="Warren P.V."/>
            <person name="Gaasterland T."/>
            <person name="Young W.G."/>
            <person name="Lenox A.L."/>
            <person name="Graham D.E."/>
            <person name="Overbeek R."/>
            <person name="Snead M.A."/>
            <person name="Keller M."/>
            <person name="Aujay M."/>
            <person name="Huber R."/>
            <person name="Feldman R.A."/>
            <person name="Short J.M."/>
            <person name="Olsen G.J."/>
            <person name="Swanson R.V."/>
        </authorList>
    </citation>
    <scope>NUCLEOTIDE SEQUENCE [LARGE SCALE GENOMIC DNA]</scope>
    <source>
        <strain>VF5</strain>
    </source>
</reference>
<reference key="2">
    <citation type="journal article" date="2009" name="Proc. Natl. Acad. Sci. U.S.A.">
        <title>Structure of ERA in complex with the 3' end of 16S rRNA: implications for ribosome biogenesis.</title>
        <authorList>
            <person name="Tu C."/>
            <person name="Zhou X."/>
            <person name="Tropea J.E."/>
            <person name="Austin B.P."/>
            <person name="Waugh D.S."/>
            <person name="Court D.L."/>
            <person name="Ji X."/>
        </authorList>
    </citation>
    <scope>X-RAY CRYSTALLOGRAPHY (1.9 ANGSTROMS) IN TERNARY COMPLEX WITH A GTP ANALOG AND RNA</scope>
    <scope>RRNA-BINDING</scope>
    <scope>GTPASE ACTIVITY</scope>
</reference>
<accession>O67800</accession>
<name>ERA_AQUAE</name>
<comment type="function">
    <text evidence="1">An essential GTPase that binds both GDP and GTP, with rapid nucleotide exchange. Plays a role in 16S rRNA processing and 30S ribosomal subunit biogenesis and possibly also in cell cycle regulation and energy metabolism (By similarity). The GTPase is stimulated about 6-fold in the presence of a 12 nucleotide 16S rRNA C-terminal fragment. Mutations in the rRNA sequence obviate stimulation. RNA-binding depends on GTP-binding by the GTPase domain. May function as a checkpoint for assembly of the 30S ribosomal subunit.</text>
</comment>
<comment type="subunit">
    <text evidence="4">Monomer.</text>
</comment>
<comment type="subcellular location">
    <subcellularLocation>
        <location>Cytoplasm</location>
    </subcellularLocation>
    <subcellularLocation>
        <location evidence="1">Cell inner membrane</location>
        <topology evidence="1">Peripheral membrane protein</topology>
    </subcellularLocation>
</comment>
<comment type="similarity">
    <text evidence="3 4">Belongs to the TRAFAC class TrmE-Era-EngA-EngB-Septin-like GTPase superfamily. Era GTPase family.</text>
</comment>
<gene>
    <name type="primary">era</name>
    <name type="synonym">era1</name>
    <name type="ordered locus">aq_1994</name>
</gene>